<feature type="chain" id="PRO_0000207534" description="Putative uncharacterized protein YIR043C">
    <location>
        <begin position="1"/>
        <end position="230"/>
    </location>
</feature>
<feature type="transmembrane region" description="Helical" evidence="1">
    <location>
        <begin position="93"/>
        <end position="115"/>
    </location>
</feature>
<gene>
    <name type="ordered locus">YIR043C</name>
    <name type="ORF">YI8224.05C</name>
</gene>
<sequence length="230" mass="27454">MGCQEAFRTTLLEPFSLKKDEAAKVKSFKDSVSYIEEALGVYFTEVEKQWKLFNTEKSWSPVGLEDAKLPKEAYRFKLTWILKRIFKLRCLQVFLYYFLIVYTSGNVDLISRFLFPVVMFFIMTRDFQNMGMIVLSVKMEHKMQFLSTIINEQESGANGWDEIAKKMNRYLFEKKVWNNEEFFYDGLDCEWFFSCFFYRLLSLKKTMWFASLNVELWPYVKEAQSVVTSL</sequence>
<name>YIW3_YEAST</name>
<organism>
    <name type="scientific">Saccharomyces cerevisiae (strain ATCC 204508 / S288c)</name>
    <name type="common">Baker's yeast</name>
    <dbReference type="NCBI Taxonomy" id="559292"/>
    <lineage>
        <taxon>Eukaryota</taxon>
        <taxon>Fungi</taxon>
        <taxon>Dikarya</taxon>
        <taxon>Ascomycota</taxon>
        <taxon>Saccharomycotina</taxon>
        <taxon>Saccharomycetes</taxon>
        <taxon>Saccharomycetales</taxon>
        <taxon>Saccharomycetaceae</taxon>
        <taxon>Saccharomyces</taxon>
    </lineage>
</organism>
<keyword id="KW-0472">Membrane</keyword>
<keyword id="KW-0812">Transmembrane</keyword>
<keyword id="KW-1133">Transmembrane helix</keyword>
<proteinExistence type="uncertain"/>
<reference key="1">
    <citation type="journal article" date="1997" name="Nature">
        <title>The nucleotide sequence of Saccharomyces cerevisiae chromosome IX.</title>
        <authorList>
            <person name="Churcher C.M."/>
            <person name="Bowman S."/>
            <person name="Badcock K."/>
            <person name="Bankier A.T."/>
            <person name="Brown D."/>
            <person name="Chillingworth T."/>
            <person name="Connor R."/>
            <person name="Devlin K."/>
            <person name="Gentles S."/>
            <person name="Hamlin N."/>
            <person name="Harris D.E."/>
            <person name="Horsnell T."/>
            <person name="Hunt S."/>
            <person name="Jagels K."/>
            <person name="Jones M."/>
            <person name="Lye G."/>
            <person name="Moule S."/>
            <person name="Odell C."/>
            <person name="Pearson D."/>
            <person name="Rajandream M.A."/>
            <person name="Rice P."/>
            <person name="Rowley N."/>
            <person name="Skelton J."/>
            <person name="Smith V."/>
            <person name="Walsh S.V."/>
            <person name="Whitehead S."/>
            <person name="Barrell B.G."/>
        </authorList>
    </citation>
    <scope>NUCLEOTIDE SEQUENCE [LARGE SCALE GENOMIC DNA]</scope>
    <source>
        <strain>ATCC 204508 / S288c</strain>
    </source>
</reference>
<reference key="2">
    <citation type="journal article" date="2014" name="G3 (Bethesda)">
        <title>The reference genome sequence of Saccharomyces cerevisiae: Then and now.</title>
        <authorList>
            <person name="Engel S.R."/>
            <person name="Dietrich F.S."/>
            <person name="Fisk D.G."/>
            <person name="Binkley G."/>
            <person name="Balakrishnan R."/>
            <person name="Costanzo M.C."/>
            <person name="Dwight S.S."/>
            <person name="Hitz B.C."/>
            <person name="Karra K."/>
            <person name="Nash R.S."/>
            <person name="Weng S."/>
            <person name="Wong E.D."/>
            <person name="Lloyd P."/>
            <person name="Skrzypek M.S."/>
            <person name="Miyasato S.R."/>
            <person name="Simison M."/>
            <person name="Cherry J.M."/>
        </authorList>
    </citation>
    <scope>GENOME REANNOTATION</scope>
    <source>
        <strain>ATCC 204508 / S288c</strain>
    </source>
</reference>
<accession>P40587</accession>
<dbReference type="EMBL" id="Z46902">
    <property type="protein sequence ID" value="CAA87002.1"/>
    <property type="molecule type" value="Genomic_DNA"/>
</dbReference>
<dbReference type="PIR" id="S50348">
    <property type="entry name" value="S50348"/>
</dbReference>
<dbReference type="IntAct" id="P40587">
    <property type="interactions" value="1"/>
</dbReference>
<dbReference type="AGR" id="SGD:S000001482"/>
<dbReference type="SGD" id="S000001482">
    <property type="gene designation" value="YIR043C"/>
</dbReference>
<dbReference type="GO" id="GO:0016020">
    <property type="term" value="C:membrane"/>
    <property type="evidence" value="ECO:0007669"/>
    <property type="project" value="UniProtKB-SubCell"/>
</dbReference>
<dbReference type="InterPro" id="IPR001142">
    <property type="entry name" value="DUP/COS"/>
</dbReference>
<dbReference type="Pfam" id="PF00674">
    <property type="entry name" value="DUP"/>
    <property type="match status" value="1"/>
</dbReference>
<protein>
    <recommendedName>
        <fullName>Putative uncharacterized protein YIR043C</fullName>
    </recommendedName>
</protein>
<evidence type="ECO:0000255" key="1"/>
<evidence type="ECO:0000305" key="2"/>
<evidence type="ECO:0000305" key="3">
    <source>
    </source>
</evidence>
<comment type="subcellular location">
    <subcellularLocation>
        <location evidence="2">Membrane</location>
        <topology evidence="2">Single-pass membrane protein</topology>
    </subcellularLocation>
</comment>
<comment type="similarity">
    <text evidence="2">Belongs to the DUP/COS family.</text>
</comment>
<comment type="caution">
    <text evidence="3">Could be the product of a pseudogene unlikely to encode a functional protein. This is a truncated version of a DUP/COS protein family member. Because of that it is not part of the S.cerevisiae S288c complete/reference proteome set.</text>
</comment>